<dbReference type="EC" id="2.1.1.67" evidence="1"/>
<dbReference type="EMBL" id="CP000009">
    <property type="protein sequence ID" value="AAW60457.1"/>
    <property type="molecule type" value="Genomic_DNA"/>
</dbReference>
<dbReference type="RefSeq" id="WP_011252256.1">
    <property type="nucleotide sequence ID" value="NC_006677.1"/>
</dbReference>
<dbReference type="SMR" id="Q5FT39"/>
<dbReference type="STRING" id="290633.GOX0680"/>
<dbReference type="KEGG" id="gox:GOX0680"/>
<dbReference type="eggNOG" id="COG0500">
    <property type="taxonomic scope" value="Bacteria"/>
</dbReference>
<dbReference type="HOGENOM" id="CLU_085515_1_0_5"/>
<dbReference type="Proteomes" id="UP000006375">
    <property type="component" value="Chromosome"/>
</dbReference>
<dbReference type="GO" id="GO:0005737">
    <property type="term" value="C:cytoplasm"/>
    <property type="evidence" value="ECO:0007669"/>
    <property type="project" value="UniProtKB-SubCell"/>
</dbReference>
<dbReference type="GO" id="GO:0008119">
    <property type="term" value="F:thiopurine S-methyltransferase activity"/>
    <property type="evidence" value="ECO:0007669"/>
    <property type="project" value="UniProtKB-UniRule"/>
</dbReference>
<dbReference type="GO" id="GO:0032259">
    <property type="term" value="P:methylation"/>
    <property type="evidence" value="ECO:0007669"/>
    <property type="project" value="UniProtKB-KW"/>
</dbReference>
<dbReference type="GO" id="GO:0010038">
    <property type="term" value="P:response to metal ion"/>
    <property type="evidence" value="ECO:0007669"/>
    <property type="project" value="InterPro"/>
</dbReference>
<dbReference type="FunFam" id="3.40.50.150:FF:000101">
    <property type="entry name" value="Thiopurine S-methyltransferase"/>
    <property type="match status" value="1"/>
</dbReference>
<dbReference type="Gene3D" id="3.40.50.150">
    <property type="entry name" value="Vaccinia Virus protein VP39"/>
    <property type="match status" value="1"/>
</dbReference>
<dbReference type="HAMAP" id="MF_00812">
    <property type="entry name" value="Thiopur_methtran"/>
    <property type="match status" value="1"/>
</dbReference>
<dbReference type="InterPro" id="IPR029063">
    <property type="entry name" value="SAM-dependent_MTases_sf"/>
</dbReference>
<dbReference type="InterPro" id="IPR022474">
    <property type="entry name" value="Thiopur_S-MeTfrase_Se/Te_detox"/>
</dbReference>
<dbReference type="InterPro" id="IPR025835">
    <property type="entry name" value="Thiopurine_S-MeTrfase"/>
</dbReference>
<dbReference type="InterPro" id="IPR008854">
    <property type="entry name" value="TPMT"/>
</dbReference>
<dbReference type="NCBIfam" id="NF009732">
    <property type="entry name" value="PRK13255.1"/>
    <property type="match status" value="1"/>
</dbReference>
<dbReference type="NCBIfam" id="TIGR03840">
    <property type="entry name" value="TMPT_Se_Te"/>
    <property type="match status" value="1"/>
</dbReference>
<dbReference type="PANTHER" id="PTHR10259">
    <property type="entry name" value="THIOPURINE S-METHYLTRANSFERASE"/>
    <property type="match status" value="1"/>
</dbReference>
<dbReference type="PANTHER" id="PTHR10259:SF11">
    <property type="entry name" value="THIOPURINE S-METHYLTRANSFERASE"/>
    <property type="match status" value="1"/>
</dbReference>
<dbReference type="Pfam" id="PF05724">
    <property type="entry name" value="TPMT"/>
    <property type="match status" value="1"/>
</dbReference>
<dbReference type="PIRSF" id="PIRSF023956">
    <property type="entry name" value="Thiopurine_S-methyltransferase"/>
    <property type="match status" value="1"/>
</dbReference>
<dbReference type="SUPFAM" id="SSF53335">
    <property type="entry name" value="S-adenosyl-L-methionine-dependent methyltransferases"/>
    <property type="match status" value="1"/>
</dbReference>
<dbReference type="PROSITE" id="PS51585">
    <property type="entry name" value="SAM_MT_TPMT"/>
    <property type="match status" value="1"/>
</dbReference>
<evidence type="ECO:0000255" key="1">
    <source>
        <dbReference type="HAMAP-Rule" id="MF_00812"/>
    </source>
</evidence>
<accession>Q5FT39</accession>
<name>TPMT_GLUOX</name>
<keyword id="KW-0963">Cytoplasm</keyword>
<keyword id="KW-0489">Methyltransferase</keyword>
<keyword id="KW-1185">Reference proteome</keyword>
<keyword id="KW-0949">S-adenosyl-L-methionine</keyword>
<keyword id="KW-0808">Transferase</keyword>
<comment type="catalytic activity">
    <reaction evidence="1">
        <text>S-adenosyl-L-methionine + a thiopurine = S-adenosyl-L-homocysteine + a thiopurine S-methylether.</text>
        <dbReference type="EC" id="2.1.1.67"/>
    </reaction>
</comment>
<comment type="subcellular location">
    <subcellularLocation>
        <location evidence="1">Cytoplasm</location>
    </subcellularLocation>
</comment>
<comment type="similarity">
    <text evidence="1">Belongs to the class I-like SAM-binding methyltransferase superfamily. TPMT family.</text>
</comment>
<protein>
    <recommendedName>
        <fullName evidence="1">Thiopurine S-methyltransferase</fullName>
        <ecNumber evidence="1">2.1.1.67</ecNumber>
    </recommendedName>
    <alternativeName>
        <fullName evidence="1">Thiopurine methyltransferase</fullName>
    </alternativeName>
</protein>
<gene>
    <name evidence="1" type="primary">tpm</name>
    <name type="ordered locus">GOX0680</name>
</gene>
<organism>
    <name type="scientific">Gluconobacter oxydans (strain 621H)</name>
    <name type="common">Gluconobacter suboxydans</name>
    <dbReference type="NCBI Taxonomy" id="290633"/>
    <lineage>
        <taxon>Bacteria</taxon>
        <taxon>Pseudomonadati</taxon>
        <taxon>Pseudomonadota</taxon>
        <taxon>Alphaproteobacteria</taxon>
        <taxon>Acetobacterales</taxon>
        <taxon>Acetobacteraceae</taxon>
        <taxon>Gluconobacter</taxon>
    </lineage>
</organism>
<reference key="1">
    <citation type="journal article" date="2005" name="Nat. Biotechnol.">
        <title>Complete genome sequence of the acetic acid bacterium Gluconobacter oxydans.</title>
        <authorList>
            <person name="Prust C."/>
            <person name="Hoffmeister M."/>
            <person name="Liesegang H."/>
            <person name="Wiezer A."/>
            <person name="Fricke W.F."/>
            <person name="Ehrenreich A."/>
            <person name="Gottschalk G."/>
            <person name="Deppenmeier U."/>
        </authorList>
    </citation>
    <scope>NUCLEOTIDE SEQUENCE [LARGE SCALE GENOMIC DNA]</scope>
    <source>
        <strain>621H</strain>
    </source>
</reference>
<proteinExistence type="inferred from homology"/>
<sequence>MDAKSNAVFWQEKWERGETGFHEPQANPLLTRHIAALDLPAGARIFVPLCGMSQDMVWLAGQGFHVTGCELSDIAVHRFFNDLDLTPDIRDVGPLRCFSAGTIRIFAGNIFDLTPDLLGLMDGIYDRAALIALPEDLRRAYAAHLLSLTGPVPELLVTLDYDQSCLKGPPFSVDEAFLRECYGQAYAFTLLESRAVEGGLKGRCPASENVWRFSPLPPSS</sequence>
<feature type="chain" id="PRO_0000220120" description="Thiopurine S-methyltransferase">
    <location>
        <begin position="1"/>
        <end position="220"/>
    </location>
</feature>
<feature type="binding site" evidence="1">
    <location>
        <position position="14"/>
    </location>
    <ligand>
        <name>S-adenosyl-L-methionine</name>
        <dbReference type="ChEBI" id="CHEBI:59789"/>
    </ligand>
</feature>
<feature type="binding site" evidence="1">
    <location>
        <position position="49"/>
    </location>
    <ligand>
        <name>S-adenosyl-L-methionine</name>
        <dbReference type="ChEBI" id="CHEBI:59789"/>
    </ligand>
</feature>
<feature type="binding site" evidence="1">
    <location>
        <position position="70"/>
    </location>
    <ligand>
        <name>S-adenosyl-L-methionine</name>
        <dbReference type="ChEBI" id="CHEBI:59789"/>
    </ligand>
</feature>
<feature type="binding site" evidence="1">
    <location>
        <position position="127"/>
    </location>
    <ligand>
        <name>S-adenosyl-L-methionine</name>
        <dbReference type="ChEBI" id="CHEBI:59789"/>
    </ligand>
</feature>